<organism>
    <name type="scientific">Gallus gallus</name>
    <name type="common">Chicken</name>
    <dbReference type="NCBI Taxonomy" id="9031"/>
    <lineage>
        <taxon>Eukaryota</taxon>
        <taxon>Metazoa</taxon>
        <taxon>Chordata</taxon>
        <taxon>Craniata</taxon>
        <taxon>Vertebrata</taxon>
        <taxon>Euteleostomi</taxon>
        <taxon>Archelosauria</taxon>
        <taxon>Archosauria</taxon>
        <taxon>Dinosauria</taxon>
        <taxon>Saurischia</taxon>
        <taxon>Theropoda</taxon>
        <taxon>Coelurosauria</taxon>
        <taxon>Aves</taxon>
        <taxon>Neognathae</taxon>
        <taxon>Galloanserae</taxon>
        <taxon>Galliformes</taxon>
        <taxon>Phasianidae</taxon>
        <taxon>Phasianinae</taxon>
        <taxon>Gallus</taxon>
    </lineage>
</organism>
<proteinExistence type="evidence at transcript level"/>
<evidence type="ECO:0000255" key="1">
    <source>
        <dbReference type="HAMAP-Rule" id="MF_03007"/>
    </source>
</evidence>
<evidence type="ECO:0000255" key="2">
    <source>
        <dbReference type="PROSITE-ProRule" id="PRU01182"/>
    </source>
</evidence>
<evidence type="ECO:0000256" key="3">
    <source>
        <dbReference type="SAM" id="MobiDB-lite"/>
    </source>
</evidence>
<sequence>MASRKEGSGAAGGGFGASKGKGKAATTGDSAVKQVQIDGLVVLKIIKHYQEEGQGNEVVQGVLLGLVVDDRLEITNCFPFPQHTEDDADFDEVQYQMEMMRSLRHVNIDHLHVGWYQSTYYGSFVTRALLDSQFSYQHAIEESVVLIYDPIKTAQGSLSLKAYRLTPKLMEVCKEKDFSPEALKKANIAYENMFEEVPIVIKNSYLINVMLWELEKKSAVADRHELLSLASSNHLGKSLQLLMDRVDEMSQDIVKYNTYLRNVSKQQQQKHQYQQRRQQENLQRQSRGEAPLPEEDINKLFKPPQPPARMESLLIAGQINTYCQNIKEFNAQNLGKLFMAQALQDYNN</sequence>
<keyword id="KW-0963">Cytoplasm</keyword>
<keyword id="KW-0396">Initiation factor</keyword>
<keyword id="KW-0648">Protein biosynthesis</keyword>
<keyword id="KW-1185">Reference proteome</keyword>
<name>EIF3H_CHICK</name>
<reference key="1">
    <citation type="journal article" date="2005" name="Genome Biol.">
        <title>Full-length cDNAs from chicken bursal lymphocytes to facilitate gene function analysis.</title>
        <authorList>
            <person name="Caldwell R.B."/>
            <person name="Kierzek A.M."/>
            <person name="Arakawa H."/>
            <person name="Bezzubov Y."/>
            <person name="Zaim J."/>
            <person name="Fiedler P."/>
            <person name="Kutter S."/>
            <person name="Blagodatski A."/>
            <person name="Kostovska D."/>
            <person name="Koter M."/>
            <person name="Plachy J."/>
            <person name="Carninci P."/>
            <person name="Hayashizaki Y."/>
            <person name="Buerstedde J.-M."/>
        </authorList>
    </citation>
    <scope>NUCLEOTIDE SEQUENCE [LARGE SCALE MRNA]</scope>
    <source>
        <strain>CB</strain>
        <tissue>Bursa of Fabricius</tissue>
    </source>
</reference>
<protein>
    <recommendedName>
        <fullName evidence="1">Eukaryotic translation initiation factor 3 subunit H</fullName>
        <shortName evidence="1">eIF3h</shortName>
    </recommendedName>
    <alternativeName>
        <fullName evidence="1">Eukaryotic translation initiation factor 3 subunit 3</fullName>
    </alternativeName>
    <alternativeName>
        <fullName>eIF-3-gamma</fullName>
    </alternativeName>
    <alternativeName>
        <fullName evidence="1">eIF3 p40 subunit</fullName>
    </alternativeName>
</protein>
<accession>Q5ZLE6</accession>
<gene>
    <name evidence="1" type="primary">EIF3H</name>
    <name evidence="1" type="synonym">EIF3S3</name>
    <name type="ORF">RCJMB04_6i8</name>
</gene>
<comment type="function">
    <text evidence="1">Component of the eukaryotic translation initiation factor 3 (eIF-3) complex, which is involved in protein synthesis of a specialized repertoire of mRNAs and, together with other initiation factors, stimulates binding of mRNA and methionyl-tRNAi to the 40S ribosome. The eIF-3 complex specifically targets and initiates translation of a subset of mRNAs involved in cell proliferation.</text>
</comment>
<comment type="subunit">
    <text evidence="1">Component of the eukaryotic translation initiation factor 3 (eIF-3) complex, which is composed of 13 subunits: EIF3A, EIF3B, EIF3C, EIF3D, EIF3E, EIF3F, EIF3G, EIF3H, EIF3I, EIF3J, EIF3K, EIF3L and EIF3M.</text>
</comment>
<comment type="subcellular location">
    <subcellularLocation>
        <location evidence="1">Cytoplasm</location>
    </subcellularLocation>
</comment>
<comment type="similarity">
    <text evidence="1">Belongs to the eIF-3 subunit H family.</text>
</comment>
<feature type="chain" id="PRO_0000365174" description="Eukaryotic translation initiation factor 3 subunit H">
    <location>
        <begin position="1"/>
        <end position="348"/>
    </location>
</feature>
<feature type="domain" description="MPN" evidence="2">
    <location>
        <begin position="35"/>
        <end position="169"/>
    </location>
</feature>
<feature type="region of interest" description="Disordered" evidence="3">
    <location>
        <begin position="1"/>
        <end position="25"/>
    </location>
</feature>
<feature type="region of interest" description="Disordered" evidence="3">
    <location>
        <begin position="266"/>
        <end position="304"/>
    </location>
</feature>
<feature type="compositionally biased region" description="Gly residues" evidence="3">
    <location>
        <begin position="9"/>
        <end position="19"/>
    </location>
</feature>
<feature type="compositionally biased region" description="Low complexity" evidence="3">
    <location>
        <begin position="266"/>
        <end position="285"/>
    </location>
</feature>
<dbReference type="EMBL" id="AJ719788">
    <property type="protein sequence ID" value="CAG31447.1"/>
    <property type="molecule type" value="mRNA"/>
</dbReference>
<dbReference type="RefSeq" id="NP_001026122.1">
    <property type="nucleotide sequence ID" value="NM_001030951.2"/>
</dbReference>
<dbReference type="SMR" id="Q5ZLE6"/>
<dbReference type="BioGRID" id="681277">
    <property type="interactions" value="1"/>
</dbReference>
<dbReference type="FunCoup" id="Q5ZLE6">
    <property type="interactions" value="3171"/>
</dbReference>
<dbReference type="STRING" id="9031.ENSGALP00000059292"/>
<dbReference type="MEROPS" id="M67.971"/>
<dbReference type="PaxDb" id="9031-ENSGALP00000025924"/>
<dbReference type="GeneID" id="420288"/>
<dbReference type="KEGG" id="gga:420288"/>
<dbReference type="CTD" id="8667"/>
<dbReference type="VEuPathDB" id="HostDB:geneid_420288"/>
<dbReference type="eggNOG" id="KOG1560">
    <property type="taxonomic scope" value="Eukaryota"/>
</dbReference>
<dbReference type="HOGENOM" id="CLU_044094_0_0_1"/>
<dbReference type="InParanoid" id="Q5ZLE6"/>
<dbReference type="OMA" id="WYQSTYF"/>
<dbReference type="OrthoDB" id="10265695at2759"/>
<dbReference type="PhylomeDB" id="Q5ZLE6"/>
<dbReference type="TreeFam" id="TF101504"/>
<dbReference type="Reactome" id="R-GGA-72649">
    <property type="pathway name" value="Translation initiation complex formation"/>
</dbReference>
<dbReference type="Reactome" id="R-GGA-72689">
    <property type="pathway name" value="Formation of a pool of free 40S subunits"/>
</dbReference>
<dbReference type="Reactome" id="R-GGA-72695">
    <property type="pathway name" value="Formation of the ternary complex, and subsequently, the 43S complex"/>
</dbReference>
<dbReference type="Reactome" id="R-GGA-72702">
    <property type="pathway name" value="Ribosomal scanning and start codon recognition"/>
</dbReference>
<dbReference type="PRO" id="PR:Q5ZLE6"/>
<dbReference type="Proteomes" id="UP000000539">
    <property type="component" value="Chromosome 2"/>
</dbReference>
<dbReference type="Bgee" id="ENSGALG00000040522">
    <property type="expression patterns" value="Expressed in spleen and 13 other cell types or tissues"/>
</dbReference>
<dbReference type="GO" id="GO:0016282">
    <property type="term" value="C:eukaryotic 43S preinitiation complex"/>
    <property type="evidence" value="ECO:0000318"/>
    <property type="project" value="GO_Central"/>
</dbReference>
<dbReference type="GO" id="GO:0033290">
    <property type="term" value="C:eukaryotic 48S preinitiation complex"/>
    <property type="evidence" value="ECO:0007669"/>
    <property type="project" value="UniProtKB-UniRule"/>
</dbReference>
<dbReference type="GO" id="GO:0005852">
    <property type="term" value="C:eukaryotic translation initiation factor 3 complex"/>
    <property type="evidence" value="ECO:0000250"/>
    <property type="project" value="UniProtKB"/>
</dbReference>
<dbReference type="GO" id="GO:0008237">
    <property type="term" value="F:metallopeptidase activity"/>
    <property type="evidence" value="ECO:0000318"/>
    <property type="project" value="GO_Central"/>
</dbReference>
<dbReference type="GO" id="GO:0003743">
    <property type="term" value="F:translation initiation factor activity"/>
    <property type="evidence" value="ECO:0007669"/>
    <property type="project" value="UniProtKB-UniRule"/>
</dbReference>
<dbReference type="GO" id="GO:0001732">
    <property type="term" value="P:formation of cytoplasmic translation initiation complex"/>
    <property type="evidence" value="ECO:0007669"/>
    <property type="project" value="UniProtKB-UniRule"/>
</dbReference>
<dbReference type="GO" id="GO:0006413">
    <property type="term" value="P:translational initiation"/>
    <property type="evidence" value="ECO:0000250"/>
    <property type="project" value="UniProtKB"/>
</dbReference>
<dbReference type="CDD" id="cd08065">
    <property type="entry name" value="MPN_eIF3h"/>
    <property type="match status" value="1"/>
</dbReference>
<dbReference type="FunFam" id="3.40.140.10:FF:000020">
    <property type="entry name" value="Eukaryotic translation initiation factor 3 subunit H"/>
    <property type="match status" value="1"/>
</dbReference>
<dbReference type="Gene3D" id="3.40.140.10">
    <property type="entry name" value="Cytidine Deaminase, domain 2"/>
    <property type="match status" value="1"/>
</dbReference>
<dbReference type="HAMAP" id="MF_03007">
    <property type="entry name" value="eIF3h"/>
    <property type="match status" value="1"/>
</dbReference>
<dbReference type="InterPro" id="IPR027524">
    <property type="entry name" value="eIF3h"/>
</dbReference>
<dbReference type="InterPro" id="IPR045810">
    <property type="entry name" value="eIF3h_C"/>
</dbReference>
<dbReference type="InterPro" id="IPR000555">
    <property type="entry name" value="JAMM/MPN+_dom"/>
</dbReference>
<dbReference type="InterPro" id="IPR050242">
    <property type="entry name" value="JAMM_MPN+_peptidase_M67A"/>
</dbReference>
<dbReference type="InterPro" id="IPR037518">
    <property type="entry name" value="MPN"/>
</dbReference>
<dbReference type="PANTHER" id="PTHR10410">
    <property type="entry name" value="EUKARYOTIC TRANSLATION INITIATION FACTOR 3 -RELATED"/>
    <property type="match status" value="1"/>
</dbReference>
<dbReference type="Pfam" id="PF19445">
    <property type="entry name" value="eIF3h_C"/>
    <property type="match status" value="1"/>
</dbReference>
<dbReference type="Pfam" id="PF01398">
    <property type="entry name" value="JAB"/>
    <property type="match status" value="1"/>
</dbReference>
<dbReference type="SMART" id="SM00232">
    <property type="entry name" value="JAB_MPN"/>
    <property type="match status" value="1"/>
</dbReference>
<dbReference type="PROSITE" id="PS50249">
    <property type="entry name" value="MPN"/>
    <property type="match status" value="1"/>
</dbReference>